<organism>
    <name type="scientific">Bacillus subtilis (strain 168)</name>
    <dbReference type="NCBI Taxonomy" id="224308"/>
    <lineage>
        <taxon>Bacteria</taxon>
        <taxon>Bacillati</taxon>
        <taxon>Bacillota</taxon>
        <taxon>Bacilli</taxon>
        <taxon>Bacillales</taxon>
        <taxon>Bacillaceae</taxon>
        <taxon>Bacillus</taxon>
    </lineage>
</organism>
<name>YVGJ_BACSU</name>
<keyword id="KW-1003">Cell membrane</keyword>
<keyword id="KW-0464">Manganese</keyword>
<keyword id="KW-0472">Membrane</keyword>
<keyword id="KW-0479">Metal-binding</keyword>
<keyword id="KW-1185">Reference proteome</keyword>
<keyword id="KW-0964">Secreted</keyword>
<keyword id="KW-0812">Transmembrane</keyword>
<keyword id="KW-1133">Transmembrane helix</keyword>
<feature type="chain" id="PRO_0000305377" description="Uncharacterized protein YvgJ">
    <location>
        <begin position="1"/>
        <end position="213"/>
    </location>
</feature>
<feature type="chain" id="PRO_0000305378" description="Processed uncharacterized protein YvgJ">
    <location>
        <begin position="214"/>
        <end position="617"/>
    </location>
</feature>
<feature type="topological domain" description="Cytoplasmic" evidence="2">
    <location>
        <begin position="1"/>
        <end position="10"/>
    </location>
</feature>
<feature type="transmembrane region" description="Helical" evidence="2">
    <location>
        <begin position="11"/>
        <end position="31"/>
    </location>
</feature>
<feature type="topological domain" description="Extracellular" evidence="2">
    <location>
        <begin position="32"/>
        <end position="41"/>
    </location>
</feature>
<feature type="transmembrane region" description="Helical" evidence="2">
    <location>
        <begin position="42"/>
        <end position="62"/>
    </location>
</feature>
<feature type="topological domain" description="Cytoplasmic" evidence="2">
    <location>
        <begin position="63"/>
        <end position="68"/>
    </location>
</feature>
<feature type="transmembrane region" description="Helical" evidence="2">
    <location>
        <begin position="69"/>
        <end position="89"/>
    </location>
</feature>
<feature type="topological domain" description="Extracellular" evidence="2">
    <location>
        <begin position="90"/>
        <end position="115"/>
    </location>
</feature>
<feature type="transmembrane region" description="Helical" evidence="2">
    <location>
        <begin position="116"/>
        <end position="136"/>
    </location>
</feature>
<feature type="topological domain" description="Cytoplasmic" evidence="2">
    <location>
        <begin position="137"/>
        <end position="153"/>
    </location>
</feature>
<feature type="transmembrane region" description="Helical" evidence="2">
    <location>
        <begin position="154"/>
        <end position="171"/>
    </location>
</feature>
<feature type="topological domain" description="Extracellular" evidence="2">
    <location>
        <begin position="172"/>
        <end position="617"/>
    </location>
</feature>
<feature type="active site" evidence="1">
    <location>
        <position position="293"/>
    </location>
</feature>
<feature type="binding site" evidence="1">
    <location>
        <position position="251"/>
    </location>
    <ligand>
        <name>Mn(2+)</name>
        <dbReference type="ChEBI" id="CHEBI:29035"/>
    </ligand>
</feature>
<feature type="binding site" evidence="1">
    <location>
        <position position="293"/>
    </location>
    <ligand>
        <name>Mn(2+)</name>
        <dbReference type="ChEBI" id="CHEBI:29035"/>
    </ligand>
</feature>
<feature type="binding site" evidence="1">
    <location>
        <position position="408"/>
    </location>
    <ligand>
        <name>substrate</name>
    </ligand>
</feature>
<feature type="binding site" evidence="1">
    <location>
        <position position="467"/>
    </location>
    <ligand>
        <name>Mn(2+)</name>
        <dbReference type="ChEBI" id="CHEBI:29035"/>
    </ligand>
</feature>
<feature type="binding site" evidence="1">
    <location>
        <position position="468"/>
    </location>
    <ligand>
        <name>Mn(2+)</name>
        <dbReference type="ChEBI" id="CHEBI:29035"/>
    </ligand>
</feature>
<feature type="site" description="Cleavage" evidence="1">
    <location>
        <begin position="213"/>
        <end position="214"/>
    </location>
</feature>
<protein>
    <recommendedName>
        <fullName>Lipoteichoic acid synthase-like YvgJ</fullName>
    </recommendedName>
    <component>
        <recommendedName>
            <fullName>Uncharacterized protein YvgJ</fullName>
        </recommendedName>
    </component>
    <component>
        <recommendedName>
            <fullName>Processed uncharacterized protein YvgJ</fullName>
        </recommendedName>
    </component>
</protein>
<evidence type="ECO:0000250" key="1"/>
<evidence type="ECO:0000255" key="2"/>
<evidence type="ECO:0000305" key="3"/>
<reference key="1">
    <citation type="journal article" date="1998" name="Microbiology">
        <title>The yvsA-yvqA (293 degrees - 289 degrees) region of the Bacillus subtilis chromosome containing genes involved in metal ion uptake and a putative sigma factor.</title>
        <authorList>
            <person name="Wipat A."/>
            <person name="Brignell C.S."/>
            <person name="Guy J.B."/>
            <person name="Rose M."/>
            <person name="Emmerson P.T."/>
            <person name="Harwood C.R."/>
        </authorList>
    </citation>
    <scope>NUCLEOTIDE SEQUENCE [GENOMIC DNA]</scope>
    <source>
        <strain>168</strain>
    </source>
</reference>
<reference key="2">
    <citation type="journal article" date="1997" name="Nature">
        <title>The complete genome sequence of the Gram-positive bacterium Bacillus subtilis.</title>
        <authorList>
            <person name="Kunst F."/>
            <person name="Ogasawara N."/>
            <person name="Moszer I."/>
            <person name="Albertini A.M."/>
            <person name="Alloni G."/>
            <person name="Azevedo V."/>
            <person name="Bertero M.G."/>
            <person name="Bessieres P."/>
            <person name="Bolotin A."/>
            <person name="Borchert S."/>
            <person name="Borriss R."/>
            <person name="Boursier L."/>
            <person name="Brans A."/>
            <person name="Braun M."/>
            <person name="Brignell S.C."/>
            <person name="Bron S."/>
            <person name="Brouillet S."/>
            <person name="Bruschi C.V."/>
            <person name="Caldwell B."/>
            <person name="Capuano V."/>
            <person name="Carter N.M."/>
            <person name="Choi S.-K."/>
            <person name="Codani J.-J."/>
            <person name="Connerton I.F."/>
            <person name="Cummings N.J."/>
            <person name="Daniel R.A."/>
            <person name="Denizot F."/>
            <person name="Devine K.M."/>
            <person name="Duesterhoeft A."/>
            <person name="Ehrlich S.D."/>
            <person name="Emmerson P.T."/>
            <person name="Entian K.-D."/>
            <person name="Errington J."/>
            <person name="Fabret C."/>
            <person name="Ferrari E."/>
            <person name="Foulger D."/>
            <person name="Fritz C."/>
            <person name="Fujita M."/>
            <person name="Fujita Y."/>
            <person name="Fuma S."/>
            <person name="Galizzi A."/>
            <person name="Galleron N."/>
            <person name="Ghim S.-Y."/>
            <person name="Glaser P."/>
            <person name="Goffeau A."/>
            <person name="Golightly E.J."/>
            <person name="Grandi G."/>
            <person name="Guiseppi G."/>
            <person name="Guy B.J."/>
            <person name="Haga K."/>
            <person name="Haiech J."/>
            <person name="Harwood C.R."/>
            <person name="Henaut A."/>
            <person name="Hilbert H."/>
            <person name="Holsappel S."/>
            <person name="Hosono S."/>
            <person name="Hullo M.-F."/>
            <person name="Itaya M."/>
            <person name="Jones L.-M."/>
            <person name="Joris B."/>
            <person name="Karamata D."/>
            <person name="Kasahara Y."/>
            <person name="Klaerr-Blanchard M."/>
            <person name="Klein C."/>
            <person name="Kobayashi Y."/>
            <person name="Koetter P."/>
            <person name="Koningstein G."/>
            <person name="Krogh S."/>
            <person name="Kumano M."/>
            <person name="Kurita K."/>
            <person name="Lapidus A."/>
            <person name="Lardinois S."/>
            <person name="Lauber J."/>
            <person name="Lazarevic V."/>
            <person name="Lee S.-M."/>
            <person name="Levine A."/>
            <person name="Liu H."/>
            <person name="Masuda S."/>
            <person name="Mauel C."/>
            <person name="Medigue C."/>
            <person name="Medina N."/>
            <person name="Mellado R.P."/>
            <person name="Mizuno M."/>
            <person name="Moestl D."/>
            <person name="Nakai S."/>
            <person name="Noback M."/>
            <person name="Noone D."/>
            <person name="O'Reilly M."/>
            <person name="Ogawa K."/>
            <person name="Ogiwara A."/>
            <person name="Oudega B."/>
            <person name="Park S.-H."/>
            <person name="Parro V."/>
            <person name="Pohl T.M."/>
            <person name="Portetelle D."/>
            <person name="Porwollik S."/>
            <person name="Prescott A.M."/>
            <person name="Presecan E."/>
            <person name="Pujic P."/>
            <person name="Purnelle B."/>
            <person name="Rapoport G."/>
            <person name="Rey M."/>
            <person name="Reynolds S."/>
            <person name="Rieger M."/>
            <person name="Rivolta C."/>
            <person name="Rocha E."/>
            <person name="Roche B."/>
            <person name="Rose M."/>
            <person name="Sadaie Y."/>
            <person name="Sato T."/>
            <person name="Scanlan E."/>
            <person name="Schleich S."/>
            <person name="Schroeter R."/>
            <person name="Scoffone F."/>
            <person name="Sekiguchi J."/>
            <person name="Sekowska A."/>
            <person name="Seror S.J."/>
            <person name="Serror P."/>
            <person name="Shin B.-S."/>
            <person name="Soldo B."/>
            <person name="Sorokin A."/>
            <person name="Tacconi E."/>
            <person name="Takagi T."/>
            <person name="Takahashi H."/>
            <person name="Takemaru K."/>
            <person name="Takeuchi M."/>
            <person name="Tamakoshi A."/>
            <person name="Tanaka T."/>
            <person name="Terpstra P."/>
            <person name="Tognoni A."/>
            <person name="Tosato V."/>
            <person name="Uchiyama S."/>
            <person name="Vandenbol M."/>
            <person name="Vannier F."/>
            <person name="Vassarotti A."/>
            <person name="Viari A."/>
            <person name="Wambutt R."/>
            <person name="Wedler E."/>
            <person name="Wedler H."/>
            <person name="Weitzenegger T."/>
            <person name="Winters P."/>
            <person name="Wipat A."/>
            <person name="Yamamoto H."/>
            <person name="Yamane K."/>
            <person name="Yasumoto K."/>
            <person name="Yata K."/>
            <person name="Yoshida K."/>
            <person name="Yoshikawa H.-F."/>
            <person name="Zumstein E."/>
            <person name="Yoshikawa H."/>
            <person name="Danchin A."/>
        </authorList>
    </citation>
    <scope>NUCLEOTIDE SEQUENCE [LARGE SCALE GENOMIC DNA]</scope>
    <source>
        <strain>168</strain>
    </source>
</reference>
<reference key="3">
    <citation type="journal article" date="2007" name="Proc. Natl. Acad. Sci. U.S.A.">
        <title>Synthesis of glycerol phosphate lipoteichoic acid in Staphylococcus aureus.</title>
        <authorList>
            <person name="Gruendling A."/>
            <person name="Schneewind O."/>
        </authorList>
    </citation>
    <scope>NON-INVOLVEMENT IN LTA BIOSYNTHESIS</scope>
    <source>
        <strain>168</strain>
    </source>
</reference>
<sequence>MKGTFFHNQRFLCFSILFMWIKTYVIYKLGFDLQIDTLLEELMLLVNPLSFILPLFGIGLFLKENKQRAFLLIANLVLTVILISNTIFYGFYIDFITIPVLFQASNMSDMGSSVKELFHPLFIALFVDLVFLLLFARKTKHPQTKAAPHTIKRYYAASCGMLLCTLALAEVQQPKLLAHSFDREMLVKSIGLFQFHIYDTISQTVNISAKAFADEDSITAIKNYTEADYSKPDQSKFGLAKGRNVIFVTLESTQSFVLNEKVNGKEITPFMNDLIKKSYSFDHFYQQTEQGKTSDSEFIVANSLYPSLSGAVFFTKSDHQFHTMYKSLKQHDYYSAVFHANHKTFWNRDVMYDTFGIDRFFDVDDFHVTPGTSTSWGLKDKEFLEQSAKKLKSLPQPFYSSFITLTNHFPFEIDEKDQLIDEFDSSSDLLNRYVTTVRYEDEALKHFIKKLKDEGLYENSMIVFMGDHYGISEAHNEAMAEFLGKDEITPYDNVQLQRVPFIIHIPGITDQQPETIPDAGGQVDVRPTLMHLLGVETKGDIQFGNDLLSGDRTPFAVLRNGSFITNDYVYTKNTCYSQKTGEVLEDQDACLPYKEKANEELSLSDKILNGDLLRFSE</sequence>
<proteinExistence type="inferred from homology"/>
<accession>O32206</accession>
<accession>Q7B2K8</accession>
<comment type="subcellular location">
    <subcellularLocation>
        <location evidence="3">Cell membrane</location>
        <topology evidence="3">Multi-pass membrane protein</topology>
    </subcellularLocation>
</comment>
<comment type="subcellular location">
    <molecule>Processed uncharacterized protein YvgJ</molecule>
    <subcellularLocation>
        <location evidence="1">Secreted</location>
    </subcellularLocation>
</comment>
<comment type="PTM">
    <text evidence="1">Proteolytically cleaved.</text>
</comment>
<comment type="miscellaneous">
    <text>Although its sequence similarity with the glycerol phosphate lipoteichoic acid synthase LtaS, it cannot restore staphylococcal growth and LTA synthesis after ltaS depletion.</text>
</comment>
<comment type="similarity">
    <text evidence="3">Belongs to the LTA synthase family.</text>
</comment>
<gene>
    <name type="primary">yvgJ</name>
    <name type="ordered locus">BSU33360</name>
</gene>
<dbReference type="EMBL" id="AJ223978">
    <property type="protein sequence ID" value="CAA11716.1"/>
    <property type="molecule type" value="Genomic_DNA"/>
</dbReference>
<dbReference type="EMBL" id="AL009126">
    <property type="protein sequence ID" value="CAB15341.1"/>
    <property type="molecule type" value="Genomic_DNA"/>
</dbReference>
<dbReference type="PIR" id="G70039">
    <property type="entry name" value="G70039"/>
</dbReference>
<dbReference type="RefSeq" id="WP_003243932.1">
    <property type="nucleotide sequence ID" value="NZ_OZ025638.1"/>
</dbReference>
<dbReference type="SMR" id="O32206"/>
<dbReference type="FunCoup" id="O32206">
    <property type="interactions" value="91"/>
</dbReference>
<dbReference type="IntAct" id="O32206">
    <property type="interactions" value="1"/>
</dbReference>
<dbReference type="STRING" id="224308.BSU33360"/>
<dbReference type="PaxDb" id="224308-BSU33360"/>
<dbReference type="EnsemblBacteria" id="CAB15341">
    <property type="protein sequence ID" value="CAB15341"/>
    <property type="gene ID" value="BSU_33360"/>
</dbReference>
<dbReference type="GeneID" id="936006"/>
<dbReference type="KEGG" id="bsu:BSU33360"/>
<dbReference type="PATRIC" id="fig|224308.179.peg.3621"/>
<dbReference type="eggNOG" id="COG1368">
    <property type="taxonomic scope" value="Bacteria"/>
</dbReference>
<dbReference type="InParanoid" id="O32206"/>
<dbReference type="OrthoDB" id="5901192at2"/>
<dbReference type="PhylomeDB" id="O32206"/>
<dbReference type="BioCyc" id="BSUB:BSU33360-MONOMER"/>
<dbReference type="Proteomes" id="UP000001570">
    <property type="component" value="Chromosome"/>
</dbReference>
<dbReference type="GO" id="GO:0005576">
    <property type="term" value="C:extracellular region"/>
    <property type="evidence" value="ECO:0007669"/>
    <property type="project" value="UniProtKB-SubCell"/>
</dbReference>
<dbReference type="GO" id="GO:0016020">
    <property type="term" value="C:membrane"/>
    <property type="evidence" value="ECO:0000318"/>
    <property type="project" value="GO_Central"/>
</dbReference>
<dbReference type="GO" id="GO:0005886">
    <property type="term" value="C:plasma membrane"/>
    <property type="evidence" value="ECO:0007669"/>
    <property type="project" value="UniProtKB-SubCell"/>
</dbReference>
<dbReference type="GO" id="GO:0046872">
    <property type="term" value="F:metal ion binding"/>
    <property type="evidence" value="ECO:0007669"/>
    <property type="project" value="UniProtKB-KW"/>
</dbReference>
<dbReference type="GO" id="GO:0016740">
    <property type="term" value="F:transferase activity"/>
    <property type="evidence" value="ECO:0000318"/>
    <property type="project" value="GO_Central"/>
</dbReference>
<dbReference type="CDD" id="cd16015">
    <property type="entry name" value="LTA_synthase"/>
    <property type="match status" value="1"/>
</dbReference>
<dbReference type="Gene3D" id="3.30.1120.170">
    <property type="match status" value="1"/>
</dbReference>
<dbReference type="Gene3D" id="3.40.720.10">
    <property type="entry name" value="Alkaline Phosphatase, subunit A"/>
    <property type="match status" value="1"/>
</dbReference>
<dbReference type="InterPro" id="IPR017850">
    <property type="entry name" value="Alkaline_phosphatase_core_sf"/>
</dbReference>
<dbReference type="InterPro" id="IPR012160">
    <property type="entry name" value="LtaS-like"/>
</dbReference>
<dbReference type="InterPro" id="IPR050448">
    <property type="entry name" value="OpgB/LTA_synthase_biosynth"/>
</dbReference>
<dbReference type="InterPro" id="IPR000917">
    <property type="entry name" value="Sulfatase_N"/>
</dbReference>
<dbReference type="PANTHER" id="PTHR47371">
    <property type="entry name" value="LIPOTEICHOIC ACID SYNTHASE"/>
    <property type="match status" value="1"/>
</dbReference>
<dbReference type="PANTHER" id="PTHR47371:SF1">
    <property type="entry name" value="LIPOTEICHOIC ACID SYNTHASE-LIKE YQGS"/>
    <property type="match status" value="1"/>
</dbReference>
<dbReference type="Pfam" id="PF00884">
    <property type="entry name" value="Sulfatase"/>
    <property type="match status" value="1"/>
</dbReference>
<dbReference type="PIRSF" id="PIRSF005091">
    <property type="entry name" value="Mmb_sulf_HI1246"/>
    <property type="match status" value="1"/>
</dbReference>
<dbReference type="SUPFAM" id="SSF53649">
    <property type="entry name" value="Alkaline phosphatase-like"/>
    <property type="match status" value="1"/>
</dbReference>